<accession>B1K094</accession>
<protein>
    <recommendedName>
        <fullName evidence="1">Large ribosomal subunit protein bL20</fullName>
    </recommendedName>
    <alternativeName>
        <fullName evidence="2">50S ribosomal protein L20</fullName>
    </alternativeName>
</protein>
<name>RL20_BURO0</name>
<feature type="chain" id="PRO_1000122283" description="Large ribosomal subunit protein bL20">
    <location>
        <begin position="1"/>
        <end position="119"/>
    </location>
</feature>
<comment type="function">
    <text evidence="1">Binds directly to 23S ribosomal RNA and is necessary for the in vitro assembly process of the 50S ribosomal subunit. It is not involved in the protein synthesizing functions of that subunit.</text>
</comment>
<comment type="similarity">
    <text evidence="1">Belongs to the bacterial ribosomal protein bL20 family.</text>
</comment>
<sequence length="119" mass="13644">MPRVKRGVTARARHKKIINLAKGYRGRRNNVYRIAKQAVMRAGQYAYRDRRNKKRVFRALWITRINAAVRQHDMTYSVFINGLKKASIELDRKVLADMAVFDKAAFAAIVKQVKAAVAA</sequence>
<gene>
    <name evidence="1" type="primary">rplT</name>
    <name type="ordered locus">Bcenmc03_1455</name>
</gene>
<proteinExistence type="inferred from homology"/>
<reference key="1">
    <citation type="submission" date="2008-02" db="EMBL/GenBank/DDBJ databases">
        <title>Complete sequence of chromosome 1 of Burkholderia cenocepacia MC0-3.</title>
        <authorList>
            <person name="Copeland A."/>
            <person name="Lucas S."/>
            <person name="Lapidus A."/>
            <person name="Barry K."/>
            <person name="Bruce D."/>
            <person name="Goodwin L."/>
            <person name="Glavina del Rio T."/>
            <person name="Dalin E."/>
            <person name="Tice H."/>
            <person name="Pitluck S."/>
            <person name="Chain P."/>
            <person name="Malfatti S."/>
            <person name="Shin M."/>
            <person name="Vergez L."/>
            <person name="Schmutz J."/>
            <person name="Larimer F."/>
            <person name="Land M."/>
            <person name="Hauser L."/>
            <person name="Kyrpides N."/>
            <person name="Mikhailova N."/>
            <person name="Tiedje J."/>
            <person name="Richardson P."/>
        </authorList>
    </citation>
    <scope>NUCLEOTIDE SEQUENCE [LARGE SCALE GENOMIC DNA]</scope>
    <source>
        <strain>MC0-3</strain>
    </source>
</reference>
<keyword id="KW-0687">Ribonucleoprotein</keyword>
<keyword id="KW-0689">Ribosomal protein</keyword>
<keyword id="KW-0694">RNA-binding</keyword>
<keyword id="KW-0699">rRNA-binding</keyword>
<dbReference type="EMBL" id="CP000958">
    <property type="protein sequence ID" value="ACA90630.1"/>
    <property type="molecule type" value="Genomic_DNA"/>
</dbReference>
<dbReference type="RefSeq" id="WP_004192938.1">
    <property type="nucleotide sequence ID" value="NC_010508.1"/>
</dbReference>
<dbReference type="SMR" id="B1K094"/>
<dbReference type="GeneID" id="98102114"/>
<dbReference type="KEGG" id="bcm:Bcenmc03_1455"/>
<dbReference type="HOGENOM" id="CLU_123265_0_1_4"/>
<dbReference type="Proteomes" id="UP000002169">
    <property type="component" value="Chromosome 1"/>
</dbReference>
<dbReference type="GO" id="GO:1990904">
    <property type="term" value="C:ribonucleoprotein complex"/>
    <property type="evidence" value="ECO:0007669"/>
    <property type="project" value="UniProtKB-KW"/>
</dbReference>
<dbReference type="GO" id="GO:0005840">
    <property type="term" value="C:ribosome"/>
    <property type="evidence" value="ECO:0007669"/>
    <property type="project" value="UniProtKB-KW"/>
</dbReference>
<dbReference type="GO" id="GO:0019843">
    <property type="term" value="F:rRNA binding"/>
    <property type="evidence" value="ECO:0007669"/>
    <property type="project" value="UniProtKB-UniRule"/>
</dbReference>
<dbReference type="GO" id="GO:0003735">
    <property type="term" value="F:structural constituent of ribosome"/>
    <property type="evidence" value="ECO:0007669"/>
    <property type="project" value="InterPro"/>
</dbReference>
<dbReference type="GO" id="GO:0000027">
    <property type="term" value="P:ribosomal large subunit assembly"/>
    <property type="evidence" value="ECO:0007669"/>
    <property type="project" value="UniProtKB-UniRule"/>
</dbReference>
<dbReference type="GO" id="GO:0006412">
    <property type="term" value="P:translation"/>
    <property type="evidence" value="ECO:0007669"/>
    <property type="project" value="InterPro"/>
</dbReference>
<dbReference type="CDD" id="cd07026">
    <property type="entry name" value="Ribosomal_L20"/>
    <property type="match status" value="1"/>
</dbReference>
<dbReference type="FunFam" id="1.10.1900.20:FF:000001">
    <property type="entry name" value="50S ribosomal protein L20"/>
    <property type="match status" value="1"/>
</dbReference>
<dbReference type="Gene3D" id="6.10.160.10">
    <property type="match status" value="1"/>
</dbReference>
<dbReference type="Gene3D" id="1.10.1900.20">
    <property type="entry name" value="Ribosomal protein L20"/>
    <property type="match status" value="1"/>
</dbReference>
<dbReference type="HAMAP" id="MF_00382">
    <property type="entry name" value="Ribosomal_bL20"/>
    <property type="match status" value="1"/>
</dbReference>
<dbReference type="InterPro" id="IPR005813">
    <property type="entry name" value="Ribosomal_bL20"/>
</dbReference>
<dbReference type="InterPro" id="IPR049946">
    <property type="entry name" value="RIBOSOMAL_L20_CS"/>
</dbReference>
<dbReference type="InterPro" id="IPR035566">
    <property type="entry name" value="Ribosomal_protein_bL20_C"/>
</dbReference>
<dbReference type="NCBIfam" id="TIGR01032">
    <property type="entry name" value="rplT_bact"/>
    <property type="match status" value="1"/>
</dbReference>
<dbReference type="PANTHER" id="PTHR10986">
    <property type="entry name" value="39S RIBOSOMAL PROTEIN L20"/>
    <property type="match status" value="1"/>
</dbReference>
<dbReference type="Pfam" id="PF00453">
    <property type="entry name" value="Ribosomal_L20"/>
    <property type="match status" value="1"/>
</dbReference>
<dbReference type="PRINTS" id="PR00062">
    <property type="entry name" value="RIBOSOMALL20"/>
</dbReference>
<dbReference type="SUPFAM" id="SSF74731">
    <property type="entry name" value="Ribosomal protein L20"/>
    <property type="match status" value="1"/>
</dbReference>
<dbReference type="PROSITE" id="PS00937">
    <property type="entry name" value="RIBOSOMAL_L20"/>
    <property type="match status" value="1"/>
</dbReference>
<organism>
    <name type="scientific">Burkholderia orbicola (strain MC0-3)</name>
    <dbReference type="NCBI Taxonomy" id="406425"/>
    <lineage>
        <taxon>Bacteria</taxon>
        <taxon>Pseudomonadati</taxon>
        <taxon>Pseudomonadota</taxon>
        <taxon>Betaproteobacteria</taxon>
        <taxon>Burkholderiales</taxon>
        <taxon>Burkholderiaceae</taxon>
        <taxon>Burkholderia</taxon>
        <taxon>Burkholderia cepacia complex</taxon>
        <taxon>Burkholderia orbicola</taxon>
    </lineage>
</organism>
<evidence type="ECO:0000255" key="1">
    <source>
        <dbReference type="HAMAP-Rule" id="MF_00382"/>
    </source>
</evidence>
<evidence type="ECO:0000305" key="2"/>